<organism>
    <name type="scientific">Rattus norvegicus</name>
    <name type="common">Rat</name>
    <dbReference type="NCBI Taxonomy" id="10116"/>
    <lineage>
        <taxon>Eukaryota</taxon>
        <taxon>Metazoa</taxon>
        <taxon>Chordata</taxon>
        <taxon>Craniata</taxon>
        <taxon>Vertebrata</taxon>
        <taxon>Euteleostomi</taxon>
        <taxon>Mammalia</taxon>
        <taxon>Eutheria</taxon>
        <taxon>Euarchontoglires</taxon>
        <taxon>Glires</taxon>
        <taxon>Rodentia</taxon>
        <taxon>Myomorpha</taxon>
        <taxon>Muroidea</taxon>
        <taxon>Muridae</taxon>
        <taxon>Murinae</taxon>
        <taxon>Rattus</taxon>
    </lineage>
</organism>
<gene>
    <name type="primary">Ube2d2b</name>
    <name type="synonym">Ube2d2</name>
</gene>
<feature type="chain" id="PRO_0000082469" description="Ubiquitin-conjugating enzyme E2 D2B">
    <location>
        <begin position="1"/>
        <end position="147"/>
    </location>
</feature>
<feature type="domain" description="UBC core" evidence="2">
    <location>
        <begin position="1"/>
        <end position="147"/>
    </location>
</feature>
<feature type="active site" description="Glycyl thioester intermediate" evidence="2 3">
    <location>
        <position position="85"/>
    </location>
</feature>
<evidence type="ECO:0000250" key="1">
    <source>
        <dbReference type="UniProtKB" id="P62837"/>
    </source>
</evidence>
<evidence type="ECO:0000255" key="2">
    <source>
        <dbReference type="PROSITE-ProRule" id="PRU00388"/>
    </source>
</evidence>
<evidence type="ECO:0000255" key="3">
    <source>
        <dbReference type="PROSITE-ProRule" id="PRU10133"/>
    </source>
</evidence>
<evidence type="ECO:0000269" key="4">
    <source>
    </source>
</evidence>
<proteinExistence type="evidence at protein level"/>
<keyword id="KW-0067">ATP-binding</keyword>
<keyword id="KW-0547">Nucleotide-binding</keyword>
<keyword id="KW-1185">Reference proteome</keyword>
<keyword id="KW-0808">Transferase</keyword>
<keyword id="KW-0833">Ubl conjugation pathway</keyword>
<comment type="function">
    <text evidence="1 2">Catalyzes the covalent attachment of ubiquitin to other proteins. Mediates the selective degradation of short-lived and abnormal proteins. Functions in the E6/E6-AP-induced ubiquitination of p53/TP53. Mediates ubiquitination of PEX5 and SQSTM1 and autoubiquitination of STUB1 and TRAF6. Involved in the signal-induced conjugation and subsequent degradation of NFKBIA, FBXW2-mediated GCM1 ubiquitination and degradation, MDM2-dependent degradation of p53/TP53 and the activation of MAVS in the mitochondria by RIGI in response to viral infection Plays a role in early maturation of the testis.</text>
</comment>
<comment type="catalytic activity">
    <reaction evidence="1 2 3">
        <text>S-ubiquitinyl-[E1 ubiquitin-activating enzyme]-L-cysteine + [E2 ubiquitin-conjugating enzyme]-L-cysteine = [E1 ubiquitin-activating enzyme]-L-cysteine + S-ubiquitinyl-[E2 ubiquitin-conjugating enzyme]-L-cysteine.</text>
        <dbReference type="EC" id="2.3.2.23"/>
    </reaction>
</comment>
<comment type="pathway">
    <text evidence="2">Protein modification; protein ubiquitination.</text>
</comment>
<comment type="subunit">
    <text evidence="1">Interacts with CNOT4 (via RING domain).</text>
</comment>
<comment type="tissue specificity">
    <text evidence="4">Testis-specific. Mainly expressed in the round spermatids (at protein level).</text>
</comment>
<comment type="similarity">
    <text evidence="2">Belongs to the ubiquitin-conjugating enzyme family.</text>
</comment>
<name>U2D2B_RAT</name>
<dbReference type="EC" id="2.3.2.23"/>
<dbReference type="EMBL" id="U56407">
    <property type="protein sequence ID" value="AAC52942.1"/>
    <property type="molecule type" value="mRNA"/>
</dbReference>
<dbReference type="EMBL" id="BC078808">
    <property type="protein sequence ID" value="AAH78808.1"/>
    <property type="molecule type" value="mRNA"/>
</dbReference>
<dbReference type="RefSeq" id="NP_112263.1">
    <property type="nucleotide sequence ID" value="NM_031001.2"/>
</dbReference>
<dbReference type="SMR" id="P70711"/>
<dbReference type="FunCoup" id="P70711">
    <property type="interactions" value="314"/>
</dbReference>
<dbReference type="STRING" id="10116.ENSRNOP00000039621"/>
<dbReference type="iPTMnet" id="P70711"/>
<dbReference type="PhosphoSitePlus" id="P70711"/>
<dbReference type="PaxDb" id="10116-ENSRNOP00000039621"/>
<dbReference type="GeneID" id="79435"/>
<dbReference type="KEGG" id="rno:79435"/>
<dbReference type="UCSC" id="RGD:69425">
    <property type="organism name" value="rat"/>
</dbReference>
<dbReference type="AGR" id="RGD:69425"/>
<dbReference type="CTD" id="73318"/>
<dbReference type="RGD" id="69425">
    <property type="gene designation" value="Ube2d2b"/>
</dbReference>
<dbReference type="eggNOG" id="KOG0417">
    <property type="taxonomic scope" value="Eukaryota"/>
</dbReference>
<dbReference type="HOGENOM" id="CLU_030988_13_3_1"/>
<dbReference type="InParanoid" id="P70711"/>
<dbReference type="OrthoDB" id="7851174at2759"/>
<dbReference type="PhylomeDB" id="P70711"/>
<dbReference type="TreeFam" id="TF101108"/>
<dbReference type="UniPathway" id="UPA00143"/>
<dbReference type="PRO" id="PR:P70711"/>
<dbReference type="Proteomes" id="UP000002494">
    <property type="component" value="Chromosome 14"/>
</dbReference>
<dbReference type="Bgee" id="ENSRNOG00000034016">
    <property type="expression patterns" value="Expressed in testis and 2 other cell types or tissues"/>
</dbReference>
<dbReference type="GO" id="GO:0005634">
    <property type="term" value="C:nucleus"/>
    <property type="evidence" value="ECO:0000318"/>
    <property type="project" value="GO_Central"/>
</dbReference>
<dbReference type="GO" id="GO:0005524">
    <property type="term" value="F:ATP binding"/>
    <property type="evidence" value="ECO:0007669"/>
    <property type="project" value="UniProtKB-KW"/>
</dbReference>
<dbReference type="GO" id="GO:0061631">
    <property type="term" value="F:ubiquitin conjugating enzyme activity"/>
    <property type="evidence" value="ECO:0000266"/>
    <property type="project" value="RGD"/>
</dbReference>
<dbReference type="GO" id="GO:0004842">
    <property type="term" value="F:ubiquitin-protein transferase activity"/>
    <property type="evidence" value="ECO:0000266"/>
    <property type="project" value="RGD"/>
</dbReference>
<dbReference type="GO" id="GO:1903841">
    <property type="term" value="P:cellular response to arsenite(3-)"/>
    <property type="evidence" value="ECO:0000270"/>
    <property type="project" value="RGD"/>
</dbReference>
<dbReference type="GO" id="GO:0071276">
    <property type="term" value="P:cellular response to cadmium ion"/>
    <property type="evidence" value="ECO:0000270"/>
    <property type="project" value="RGD"/>
</dbReference>
<dbReference type="GO" id="GO:0070979">
    <property type="term" value="P:protein K11-linked ubiquitination"/>
    <property type="evidence" value="ECO:0000266"/>
    <property type="project" value="RGD"/>
</dbReference>
<dbReference type="GO" id="GO:0044314">
    <property type="term" value="P:protein K27-linked ubiquitination"/>
    <property type="evidence" value="ECO:0000266"/>
    <property type="project" value="RGD"/>
</dbReference>
<dbReference type="GO" id="GO:0035519">
    <property type="term" value="P:protein K29-linked ubiquitination"/>
    <property type="evidence" value="ECO:0000266"/>
    <property type="project" value="RGD"/>
</dbReference>
<dbReference type="GO" id="GO:0070936">
    <property type="term" value="P:protein K48-linked ubiquitination"/>
    <property type="evidence" value="ECO:0000266"/>
    <property type="project" value="RGD"/>
</dbReference>
<dbReference type="GO" id="GO:0085020">
    <property type="term" value="P:protein K6-linked ubiquitination"/>
    <property type="evidence" value="ECO:0000266"/>
    <property type="project" value="RGD"/>
</dbReference>
<dbReference type="GO" id="GO:0070534">
    <property type="term" value="P:protein K63-linked ubiquitination"/>
    <property type="evidence" value="ECO:0000266"/>
    <property type="project" value="RGD"/>
</dbReference>
<dbReference type="GO" id="GO:0016567">
    <property type="term" value="P:protein ubiquitination"/>
    <property type="evidence" value="ECO:0000266"/>
    <property type="project" value="RGD"/>
</dbReference>
<dbReference type="GO" id="GO:0006511">
    <property type="term" value="P:ubiquitin-dependent protein catabolic process"/>
    <property type="evidence" value="ECO:0000318"/>
    <property type="project" value="GO_Central"/>
</dbReference>
<dbReference type="CDD" id="cd23792">
    <property type="entry name" value="UBCc_UBE2D"/>
    <property type="match status" value="1"/>
</dbReference>
<dbReference type="FunFam" id="3.10.110.10:FF:000101">
    <property type="entry name" value="Ubiquitin-conjugating enzyme E2 D2"/>
    <property type="match status" value="1"/>
</dbReference>
<dbReference type="Gene3D" id="3.10.110.10">
    <property type="entry name" value="Ubiquitin Conjugating Enzyme"/>
    <property type="match status" value="1"/>
</dbReference>
<dbReference type="InterPro" id="IPR000608">
    <property type="entry name" value="UBQ-conjugat_E2_core"/>
</dbReference>
<dbReference type="InterPro" id="IPR023313">
    <property type="entry name" value="UBQ-conjugating_AS"/>
</dbReference>
<dbReference type="InterPro" id="IPR016135">
    <property type="entry name" value="UBQ-conjugating_enzyme/RWD"/>
</dbReference>
<dbReference type="PANTHER" id="PTHR24068">
    <property type="entry name" value="UBIQUITIN-CONJUGATING ENZYME E2"/>
    <property type="match status" value="1"/>
</dbReference>
<dbReference type="Pfam" id="PF00179">
    <property type="entry name" value="UQ_con"/>
    <property type="match status" value="1"/>
</dbReference>
<dbReference type="SMART" id="SM00212">
    <property type="entry name" value="UBCc"/>
    <property type="match status" value="1"/>
</dbReference>
<dbReference type="SUPFAM" id="SSF54495">
    <property type="entry name" value="UBC-like"/>
    <property type="match status" value="1"/>
</dbReference>
<dbReference type="PROSITE" id="PS00183">
    <property type="entry name" value="UBC_1"/>
    <property type="match status" value="1"/>
</dbReference>
<dbReference type="PROSITE" id="PS50127">
    <property type="entry name" value="UBC_2"/>
    <property type="match status" value="1"/>
</dbReference>
<reference key="1">
    <citation type="journal article" date="1996" name="Mol. Cell. Biol.">
        <title>A novel rat homolog of the Saccharomyces cerevisiae ubiquitin-conjugating enzymes UBC4 and UBC5 with distinct biochemical features is induced during spermatogenesis.</title>
        <authorList>
            <person name="Wing S.S."/>
            <person name="Bedard N."/>
            <person name="Morales C."/>
            <person name="Hingamp P."/>
            <person name="Trasler J."/>
        </authorList>
    </citation>
    <scope>NUCLEOTIDE SEQUENCE [MRNA]</scope>
    <scope>TISSUE SPECIFICITY</scope>
    <source>
        <tissue>Testis</tissue>
    </source>
</reference>
<reference key="2">
    <citation type="journal article" date="2004" name="Genome Res.">
        <title>The status, quality, and expansion of the NIH full-length cDNA project: the Mammalian Gene Collection (MGC).</title>
        <authorList>
            <consortium name="The MGC Project Team"/>
        </authorList>
    </citation>
    <scope>NUCLEOTIDE SEQUENCE [LARGE SCALE MRNA]</scope>
    <source>
        <tissue>Testis</tissue>
    </source>
</reference>
<protein>
    <recommendedName>
        <fullName>Ubiquitin-conjugating enzyme E2 D2B</fullName>
        <ecNumber>2.3.2.23</ecNumber>
    </recommendedName>
    <alternativeName>
        <fullName>E2 ubiquitin-conjugating enzyme D2B</fullName>
    </alternativeName>
    <alternativeName>
        <fullName>Ubiquitin carrier protein D2B</fullName>
    </alternativeName>
    <alternativeName>
        <fullName>Ubiquitin-conjugating enzyme E2(17)KB 2B</fullName>
    </alternativeName>
    <alternativeName>
        <fullName>Ubiquitin-conjugating enzyme E2-17 kDa 2B</fullName>
    </alternativeName>
    <alternativeName>
        <fullName>Ubiquitin-protein ligase D2B</fullName>
    </alternativeName>
</protein>
<accession>P70711</accession>
<sequence>MALKRIHKELNDLAQDPPAQCSAGPVGEDMFHWQATIMGPNDSPYQGGAFFLTIDFPTEYPFKPPKVEFTTRIYHPNVNSNGSICLDILRSQWSPALTISKVLLSISSLLCDPNPDDPLVPEIAQIYKTDRDKYNRTAREWTQKYAM</sequence>